<sequence>MRSLTIRRPDDWHLHLRDGAMLEGVIGDTSRHFARAIIMPNLVPPVVTTADAEAYRQRILAAVPKGDRFEPLMTLYLTEQTSPDDVEEGKTTGLITAVKLYPAGATTNSHGGVRDLDKAMPVLERMAKIGLPLCVHGEVTTPEVDIFDREAVFIDTVLDPLRRRLPELKVTMEHVTTSDGIDYILSADSNLAGSITTHHLIINRNAILVGGIRPHYYCLPVAKRESHRLALRRAATSGDSRFFLGTDSAPHVDPLKECGCGCAGIYTSINTMSCLAHVFEEDEALERLEAFVSLNGPAWYGLQPNDEMITLVRRDAPVAFPAKIETGAGPVTVFDPMFPIHWDVEAAIQA</sequence>
<name>PYRC_ALLAM</name>
<organism>
    <name type="scientific">Allorhizobium ampelinum (strain ATCC BAA-846 / DSM 112012 / S4)</name>
    <name type="common">Agrobacterium vitis (strain S4)</name>
    <dbReference type="NCBI Taxonomy" id="311402"/>
    <lineage>
        <taxon>Bacteria</taxon>
        <taxon>Pseudomonadati</taxon>
        <taxon>Pseudomonadota</taxon>
        <taxon>Alphaproteobacteria</taxon>
        <taxon>Hyphomicrobiales</taxon>
        <taxon>Rhizobiaceae</taxon>
        <taxon>Rhizobium/Agrobacterium group</taxon>
        <taxon>Allorhizobium</taxon>
        <taxon>Allorhizobium ampelinum</taxon>
    </lineage>
</organism>
<evidence type="ECO:0000255" key="1">
    <source>
        <dbReference type="HAMAP-Rule" id="MF_00219"/>
    </source>
</evidence>
<feature type="chain" id="PRO_1000193066" description="Dihydroorotase">
    <location>
        <begin position="1"/>
        <end position="350"/>
    </location>
</feature>
<feature type="active site" evidence="1">
    <location>
        <position position="247"/>
    </location>
</feature>
<feature type="binding site" evidence="1">
    <location>
        <position position="13"/>
    </location>
    <ligand>
        <name>Zn(2+)</name>
        <dbReference type="ChEBI" id="CHEBI:29105"/>
        <label>1</label>
    </ligand>
</feature>
<feature type="binding site" evidence="1">
    <location>
        <begin position="15"/>
        <end position="17"/>
    </location>
    <ligand>
        <name>substrate</name>
    </ligand>
</feature>
<feature type="binding site" evidence="1">
    <location>
        <position position="15"/>
    </location>
    <ligand>
        <name>Zn(2+)</name>
        <dbReference type="ChEBI" id="CHEBI:29105"/>
        <label>1</label>
    </ligand>
</feature>
<feature type="binding site" evidence="1">
    <location>
        <position position="41"/>
    </location>
    <ligand>
        <name>substrate</name>
    </ligand>
</feature>
<feature type="binding site" description="via carbamate group" evidence="1">
    <location>
        <position position="99"/>
    </location>
    <ligand>
        <name>Zn(2+)</name>
        <dbReference type="ChEBI" id="CHEBI:29105"/>
        <label>1</label>
    </ligand>
</feature>
<feature type="binding site" description="via carbamate group" evidence="1">
    <location>
        <position position="99"/>
    </location>
    <ligand>
        <name>Zn(2+)</name>
        <dbReference type="ChEBI" id="CHEBI:29105"/>
        <label>2</label>
    </ligand>
</feature>
<feature type="binding site" evidence="1">
    <location>
        <position position="136"/>
    </location>
    <ligand>
        <name>substrate</name>
    </ligand>
</feature>
<feature type="binding site" evidence="1">
    <location>
        <position position="136"/>
    </location>
    <ligand>
        <name>Zn(2+)</name>
        <dbReference type="ChEBI" id="CHEBI:29105"/>
        <label>2</label>
    </ligand>
</feature>
<feature type="binding site" evidence="1">
    <location>
        <position position="174"/>
    </location>
    <ligand>
        <name>Zn(2+)</name>
        <dbReference type="ChEBI" id="CHEBI:29105"/>
        <label>2</label>
    </ligand>
</feature>
<feature type="binding site" evidence="1">
    <location>
        <position position="219"/>
    </location>
    <ligand>
        <name>substrate</name>
    </ligand>
</feature>
<feature type="binding site" evidence="1">
    <location>
        <position position="247"/>
    </location>
    <ligand>
        <name>Zn(2+)</name>
        <dbReference type="ChEBI" id="CHEBI:29105"/>
        <label>1</label>
    </ligand>
</feature>
<feature type="binding site" evidence="1">
    <location>
        <position position="251"/>
    </location>
    <ligand>
        <name>substrate</name>
    </ligand>
</feature>
<feature type="binding site" evidence="1">
    <location>
        <position position="263"/>
    </location>
    <ligand>
        <name>substrate</name>
    </ligand>
</feature>
<feature type="modified residue" description="N6-carboxylysine" evidence="1">
    <location>
        <position position="99"/>
    </location>
</feature>
<proteinExistence type="inferred from homology"/>
<gene>
    <name evidence="1" type="primary">pyrC</name>
    <name type="ordered locus">Avi_0524</name>
</gene>
<reference key="1">
    <citation type="journal article" date="2009" name="J. Bacteriol.">
        <title>Genome sequences of three Agrobacterium biovars help elucidate the evolution of multichromosome genomes in bacteria.</title>
        <authorList>
            <person name="Slater S.C."/>
            <person name="Goldman B.S."/>
            <person name="Goodner B."/>
            <person name="Setubal J.C."/>
            <person name="Farrand S.K."/>
            <person name="Nester E.W."/>
            <person name="Burr T.J."/>
            <person name="Banta L."/>
            <person name="Dickerman A.W."/>
            <person name="Paulsen I."/>
            <person name="Otten L."/>
            <person name="Suen G."/>
            <person name="Welch R."/>
            <person name="Almeida N.F."/>
            <person name="Arnold F."/>
            <person name="Burton O.T."/>
            <person name="Du Z."/>
            <person name="Ewing A."/>
            <person name="Godsy E."/>
            <person name="Heisel S."/>
            <person name="Houmiel K.L."/>
            <person name="Jhaveri J."/>
            <person name="Lu J."/>
            <person name="Miller N.M."/>
            <person name="Norton S."/>
            <person name="Chen Q."/>
            <person name="Phoolcharoen W."/>
            <person name="Ohlin V."/>
            <person name="Ondrusek D."/>
            <person name="Pride N."/>
            <person name="Stricklin S.L."/>
            <person name="Sun J."/>
            <person name="Wheeler C."/>
            <person name="Wilson L."/>
            <person name="Zhu H."/>
            <person name="Wood D.W."/>
        </authorList>
    </citation>
    <scope>NUCLEOTIDE SEQUENCE [LARGE SCALE GENOMIC DNA]</scope>
    <source>
        <strain>ATCC BAA-846 / DSM 112012 / S4</strain>
    </source>
</reference>
<accession>B9JQV9</accession>
<comment type="function">
    <text evidence="1">Catalyzes the reversible cyclization of carbamoyl aspartate to dihydroorotate.</text>
</comment>
<comment type="catalytic activity">
    <reaction evidence="1">
        <text>(S)-dihydroorotate + H2O = N-carbamoyl-L-aspartate + H(+)</text>
        <dbReference type="Rhea" id="RHEA:24296"/>
        <dbReference type="ChEBI" id="CHEBI:15377"/>
        <dbReference type="ChEBI" id="CHEBI:15378"/>
        <dbReference type="ChEBI" id="CHEBI:30864"/>
        <dbReference type="ChEBI" id="CHEBI:32814"/>
        <dbReference type="EC" id="3.5.2.3"/>
    </reaction>
</comment>
<comment type="cofactor">
    <cofactor evidence="1">
        <name>Zn(2+)</name>
        <dbReference type="ChEBI" id="CHEBI:29105"/>
    </cofactor>
    <text evidence="1">Binds 2 Zn(2+) ions per subunit.</text>
</comment>
<comment type="pathway">
    <text evidence="1">Pyrimidine metabolism; UMP biosynthesis via de novo pathway; (S)-dihydroorotate from bicarbonate: step 3/3.</text>
</comment>
<comment type="subunit">
    <text evidence="1">Homodimer.</text>
</comment>
<comment type="similarity">
    <text evidence="1">Belongs to the metallo-dependent hydrolases superfamily. DHOase family. Class II DHOase subfamily.</text>
</comment>
<protein>
    <recommendedName>
        <fullName evidence="1">Dihydroorotase</fullName>
        <shortName evidence="1">DHOase</shortName>
        <ecNumber evidence="1">3.5.2.3</ecNumber>
    </recommendedName>
</protein>
<dbReference type="EC" id="3.5.2.3" evidence="1"/>
<dbReference type="EMBL" id="CP000633">
    <property type="protein sequence ID" value="ACM35372.1"/>
    <property type="molecule type" value="Genomic_DNA"/>
</dbReference>
<dbReference type="RefSeq" id="WP_015914800.1">
    <property type="nucleotide sequence ID" value="NC_011989.1"/>
</dbReference>
<dbReference type="SMR" id="B9JQV9"/>
<dbReference type="STRING" id="311402.Avi_0524"/>
<dbReference type="KEGG" id="avi:Avi_0524"/>
<dbReference type="eggNOG" id="COG0418">
    <property type="taxonomic scope" value="Bacteria"/>
</dbReference>
<dbReference type="HOGENOM" id="CLU_041558_1_0_5"/>
<dbReference type="UniPathway" id="UPA00070">
    <property type="reaction ID" value="UER00117"/>
</dbReference>
<dbReference type="Proteomes" id="UP000001596">
    <property type="component" value="Chromosome 1"/>
</dbReference>
<dbReference type="GO" id="GO:0005829">
    <property type="term" value="C:cytosol"/>
    <property type="evidence" value="ECO:0007669"/>
    <property type="project" value="TreeGrafter"/>
</dbReference>
<dbReference type="GO" id="GO:0004151">
    <property type="term" value="F:dihydroorotase activity"/>
    <property type="evidence" value="ECO:0007669"/>
    <property type="project" value="UniProtKB-UniRule"/>
</dbReference>
<dbReference type="GO" id="GO:0008270">
    <property type="term" value="F:zinc ion binding"/>
    <property type="evidence" value="ECO:0007669"/>
    <property type="project" value="UniProtKB-UniRule"/>
</dbReference>
<dbReference type="GO" id="GO:0006207">
    <property type="term" value="P:'de novo' pyrimidine nucleobase biosynthetic process"/>
    <property type="evidence" value="ECO:0007669"/>
    <property type="project" value="TreeGrafter"/>
</dbReference>
<dbReference type="GO" id="GO:0044205">
    <property type="term" value="P:'de novo' UMP biosynthetic process"/>
    <property type="evidence" value="ECO:0007669"/>
    <property type="project" value="UniProtKB-UniRule"/>
</dbReference>
<dbReference type="CDD" id="cd01294">
    <property type="entry name" value="DHOase"/>
    <property type="match status" value="1"/>
</dbReference>
<dbReference type="Gene3D" id="3.20.20.140">
    <property type="entry name" value="Metal-dependent hydrolases"/>
    <property type="match status" value="1"/>
</dbReference>
<dbReference type="HAMAP" id="MF_00219">
    <property type="entry name" value="PyrC_classII"/>
    <property type="match status" value="1"/>
</dbReference>
<dbReference type="InterPro" id="IPR006680">
    <property type="entry name" value="Amidohydro-rel"/>
</dbReference>
<dbReference type="InterPro" id="IPR004721">
    <property type="entry name" value="DHOdimr"/>
</dbReference>
<dbReference type="InterPro" id="IPR002195">
    <property type="entry name" value="Dihydroorotase_CS"/>
</dbReference>
<dbReference type="InterPro" id="IPR032466">
    <property type="entry name" value="Metal_Hydrolase"/>
</dbReference>
<dbReference type="NCBIfam" id="TIGR00856">
    <property type="entry name" value="pyrC_dimer"/>
    <property type="match status" value="1"/>
</dbReference>
<dbReference type="PANTHER" id="PTHR43137">
    <property type="entry name" value="DIHYDROOROTASE"/>
    <property type="match status" value="1"/>
</dbReference>
<dbReference type="PANTHER" id="PTHR43137:SF1">
    <property type="entry name" value="DIHYDROOROTASE"/>
    <property type="match status" value="1"/>
</dbReference>
<dbReference type="Pfam" id="PF01979">
    <property type="entry name" value="Amidohydro_1"/>
    <property type="match status" value="1"/>
</dbReference>
<dbReference type="PIRSF" id="PIRSF001237">
    <property type="entry name" value="DHOdimr"/>
    <property type="match status" value="1"/>
</dbReference>
<dbReference type="SUPFAM" id="SSF51556">
    <property type="entry name" value="Metallo-dependent hydrolases"/>
    <property type="match status" value="1"/>
</dbReference>
<dbReference type="PROSITE" id="PS00482">
    <property type="entry name" value="DIHYDROOROTASE_1"/>
    <property type="match status" value="1"/>
</dbReference>
<dbReference type="PROSITE" id="PS00483">
    <property type="entry name" value="DIHYDROOROTASE_2"/>
    <property type="match status" value="1"/>
</dbReference>
<keyword id="KW-0378">Hydrolase</keyword>
<keyword id="KW-0479">Metal-binding</keyword>
<keyword id="KW-0665">Pyrimidine biosynthesis</keyword>
<keyword id="KW-1185">Reference proteome</keyword>
<keyword id="KW-0862">Zinc</keyword>